<reference key="1">
    <citation type="journal article" date="1998" name="J. Biol. Chem.">
        <title>EDF-1, a novel gene product down-regulated in human endothelial cell differentiation.</title>
        <authorList>
            <person name="Dragoni I."/>
            <person name="Mariotti M."/>
            <person name="Consalez G.G."/>
            <person name="Soria M.R."/>
            <person name="Maier J.A.M."/>
        </authorList>
    </citation>
    <scope>NUCLEOTIDE SEQUENCE [MRNA] (ISOFORM 1)</scope>
    <scope>TISSUE SPECIFICITY</scope>
    <scope>DEVELOPMENTAL STAGE</scope>
    <scope>INDUCTION</scope>
    <scope>FUNCTION</scope>
</reference>
<reference key="2">
    <citation type="journal article" date="1999" name="J. Biol. Chem.">
        <title>The role of human MBF1 as a transcriptional coactivator.</title>
        <authorList>
            <person name="Kabe Y."/>
            <person name="Goto M."/>
            <person name="Shima D."/>
            <person name="Imai T."/>
            <person name="Wada T."/>
            <person name="Morohashi K."/>
            <person name="Shirakawa M."/>
            <person name="Hirose S."/>
            <person name="Handa H."/>
        </authorList>
    </citation>
    <scope>NUCLEOTIDE SEQUENCE [MRNA] (ISOFORMS 1 AND 2)</scope>
    <scope>TISSUE SPECIFICITY</scope>
    <scope>INTERACTION WITH TBP; NR5A1; FOS; JUN AND ATF1</scope>
    <scope>SUBCELLULAR LOCATION</scope>
    <scope>FUNCTION</scope>
</reference>
<reference key="3">
    <citation type="submission" date="2003-07" db="EMBL/GenBank/DDBJ databases">
        <title>Cloning of human full-length CDSs in BD Creator(TM) system donor vector.</title>
        <authorList>
            <person name="Kalnine N."/>
            <person name="Chen X."/>
            <person name="Rolfs A."/>
            <person name="Halleck A."/>
            <person name="Hines L."/>
            <person name="Eisenstein S."/>
            <person name="Koundinya M."/>
            <person name="Raphael J."/>
            <person name="Moreira D."/>
            <person name="Kelley T."/>
            <person name="LaBaer J."/>
            <person name="Lin Y."/>
            <person name="Phelan M."/>
            <person name="Farmer A."/>
        </authorList>
    </citation>
    <scope>NUCLEOTIDE SEQUENCE [LARGE SCALE MRNA] (ISOFORM 1)</scope>
</reference>
<reference key="4">
    <citation type="submission" date="2004-06" db="EMBL/GenBank/DDBJ databases">
        <title>Cloning of human full open reading frames in Gateway(TM) system entry vector (pDONR201).</title>
        <authorList>
            <person name="Halleck A."/>
            <person name="Ebert L."/>
            <person name="Mkoundinya M."/>
            <person name="Schick M."/>
            <person name="Eisenstein S."/>
            <person name="Neubert P."/>
            <person name="Kstrang K."/>
            <person name="Schatten R."/>
            <person name="Shen B."/>
            <person name="Henze S."/>
            <person name="Mar W."/>
            <person name="Korn B."/>
            <person name="Zuo D."/>
            <person name="Hu Y."/>
            <person name="LaBaer J."/>
        </authorList>
    </citation>
    <scope>NUCLEOTIDE SEQUENCE [LARGE SCALE MRNA] (ISOFORM 1)</scope>
</reference>
<reference key="5">
    <citation type="journal article" date="2004" name="Nature">
        <title>DNA sequence and analysis of human chromosome 9.</title>
        <authorList>
            <person name="Humphray S.J."/>
            <person name="Oliver K."/>
            <person name="Hunt A.R."/>
            <person name="Plumb R.W."/>
            <person name="Loveland J.E."/>
            <person name="Howe K.L."/>
            <person name="Andrews T.D."/>
            <person name="Searle S."/>
            <person name="Hunt S.E."/>
            <person name="Scott C.E."/>
            <person name="Jones M.C."/>
            <person name="Ainscough R."/>
            <person name="Almeida J.P."/>
            <person name="Ambrose K.D."/>
            <person name="Ashwell R.I.S."/>
            <person name="Babbage A.K."/>
            <person name="Babbage S."/>
            <person name="Bagguley C.L."/>
            <person name="Bailey J."/>
            <person name="Banerjee R."/>
            <person name="Barker D.J."/>
            <person name="Barlow K.F."/>
            <person name="Bates K."/>
            <person name="Beasley H."/>
            <person name="Beasley O."/>
            <person name="Bird C.P."/>
            <person name="Bray-Allen S."/>
            <person name="Brown A.J."/>
            <person name="Brown J.Y."/>
            <person name="Burford D."/>
            <person name="Burrill W."/>
            <person name="Burton J."/>
            <person name="Carder C."/>
            <person name="Carter N.P."/>
            <person name="Chapman J.C."/>
            <person name="Chen Y."/>
            <person name="Clarke G."/>
            <person name="Clark S.Y."/>
            <person name="Clee C.M."/>
            <person name="Clegg S."/>
            <person name="Collier R.E."/>
            <person name="Corby N."/>
            <person name="Crosier M."/>
            <person name="Cummings A.T."/>
            <person name="Davies J."/>
            <person name="Dhami P."/>
            <person name="Dunn M."/>
            <person name="Dutta I."/>
            <person name="Dyer L.W."/>
            <person name="Earthrowl M.E."/>
            <person name="Faulkner L."/>
            <person name="Fleming C.J."/>
            <person name="Frankish A."/>
            <person name="Frankland J.A."/>
            <person name="French L."/>
            <person name="Fricker D.G."/>
            <person name="Garner P."/>
            <person name="Garnett J."/>
            <person name="Ghori J."/>
            <person name="Gilbert J.G.R."/>
            <person name="Glison C."/>
            <person name="Grafham D.V."/>
            <person name="Gribble S."/>
            <person name="Griffiths C."/>
            <person name="Griffiths-Jones S."/>
            <person name="Grocock R."/>
            <person name="Guy J."/>
            <person name="Hall R.E."/>
            <person name="Hammond S."/>
            <person name="Harley J.L."/>
            <person name="Harrison E.S.I."/>
            <person name="Hart E.A."/>
            <person name="Heath P.D."/>
            <person name="Henderson C.D."/>
            <person name="Hopkins B.L."/>
            <person name="Howard P.J."/>
            <person name="Howden P.J."/>
            <person name="Huckle E."/>
            <person name="Johnson C."/>
            <person name="Johnson D."/>
            <person name="Joy A.A."/>
            <person name="Kay M."/>
            <person name="Keenan S."/>
            <person name="Kershaw J.K."/>
            <person name="Kimberley A.M."/>
            <person name="King A."/>
            <person name="Knights A."/>
            <person name="Laird G.K."/>
            <person name="Langford C."/>
            <person name="Lawlor S."/>
            <person name="Leongamornlert D.A."/>
            <person name="Leversha M."/>
            <person name="Lloyd C."/>
            <person name="Lloyd D.M."/>
            <person name="Lovell J."/>
            <person name="Martin S."/>
            <person name="Mashreghi-Mohammadi M."/>
            <person name="Matthews L."/>
            <person name="McLaren S."/>
            <person name="McLay K.E."/>
            <person name="McMurray A."/>
            <person name="Milne S."/>
            <person name="Nickerson T."/>
            <person name="Nisbett J."/>
            <person name="Nordsiek G."/>
            <person name="Pearce A.V."/>
            <person name="Peck A.I."/>
            <person name="Porter K.M."/>
            <person name="Pandian R."/>
            <person name="Pelan S."/>
            <person name="Phillimore B."/>
            <person name="Povey S."/>
            <person name="Ramsey Y."/>
            <person name="Rand V."/>
            <person name="Scharfe M."/>
            <person name="Sehra H.K."/>
            <person name="Shownkeen R."/>
            <person name="Sims S.K."/>
            <person name="Skuce C.D."/>
            <person name="Smith M."/>
            <person name="Steward C.A."/>
            <person name="Swarbreck D."/>
            <person name="Sycamore N."/>
            <person name="Tester J."/>
            <person name="Thorpe A."/>
            <person name="Tracey A."/>
            <person name="Tromans A."/>
            <person name="Thomas D.W."/>
            <person name="Wall M."/>
            <person name="Wallis J.M."/>
            <person name="West A.P."/>
            <person name="Whitehead S.L."/>
            <person name="Willey D.L."/>
            <person name="Williams S.A."/>
            <person name="Wilming L."/>
            <person name="Wray P.W."/>
            <person name="Young L."/>
            <person name="Ashurst J.L."/>
            <person name="Coulson A."/>
            <person name="Blocker H."/>
            <person name="Durbin R.M."/>
            <person name="Sulston J.E."/>
            <person name="Hubbard T."/>
            <person name="Jackson M.J."/>
            <person name="Bentley D.R."/>
            <person name="Beck S."/>
            <person name="Rogers J."/>
            <person name="Dunham I."/>
        </authorList>
    </citation>
    <scope>NUCLEOTIDE SEQUENCE [LARGE SCALE GENOMIC DNA]</scope>
</reference>
<reference key="6">
    <citation type="journal article" date="2004" name="Genome Res.">
        <title>The status, quality, and expansion of the NIH full-length cDNA project: the Mammalian Gene Collection (MGC).</title>
        <authorList>
            <consortium name="The MGC Project Team"/>
        </authorList>
    </citation>
    <scope>NUCLEOTIDE SEQUENCE [LARGE SCALE MRNA] (ISOFORM 1)</scope>
    <source>
        <tissue>Pancreas</tissue>
    </source>
</reference>
<reference key="7">
    <citation type="submission" date="2009-03" db="UniProtKB">
        <authorList>
            <person name="Bienvenut W.V."/>
            <person name="Waridel P."/>
            <person name="Quadroni M."/>
        </authorList>
    </citation>
    <scope>PROTEIN SEQUENCE OF 2-13 AND 99-113</scope>
    <scope>CLEAVAGE OF INITIATOR METHIONINE</scope>
    <scope>ACETYLATION AT ALA-2</scope>
    <scope>IDENTIFICATION BY MASS SPECTROMETRY</scope>
    <source>
        <tissue>Cervix carcinoma</tissue>
    </source>
</reference>
<reference key="8">
    <citation type="journal article" date="2000" name="J. Biol. Chem.">
        <title>Interaction between endothelial differentiation-related factor-1 and calmodulin in vitro and in vivo.</title>
        <authorList>
            <person name="Mariotti M."/>
            <person name="De Benedictis L."/>
            <person name="Avon E."/>
            <person name="Maier J.A.M."/>
        </authorList>
    </citation>
    <scope>INTERACTION WITH CALM AND TBP</scope>
    <scope>MUTAGENESIS OF THR-40; THR-58; THR-91 AND SER-111</scope>
    <scope>PHOSPHORYLATION</scope>
    <scope>SUBCELLULAR LOCATION</scope>
</reference>
<reference key="9">
    <citation type="journal article" date="2002" name="Mol. Endocrinol.">
        <title>Multiprotein bridging factor-1 (MBF-1) is a cofactor for nuclear receptors that regulate lipid metabolism.</title>
        <authorList>
            <person name="Brendel C."/>
            <person name="Gelman L."/>
            <person name="Auwerx J."/>
        </authorList>
    </citation>
    <scope>INTERACTION WITH NR5A2; NR1H3; PPARG AND TFIID COMPLEX</scope>
    <scope>TISSUE SPECIFICITY</scope>
    <scope>FUNCTION</scope>
</reference>
<reference key="10">
    <citation type="journal article" date="2004" name="Cell. Mol. Life Sci.">
        <title>The dual role of endothelial differentiation-related factor-1 in the cytosol and nucleus: modulation by protein kinase A.</title>
        <authorList>
            <person name="Ballabio E."/>
            <person name="Mariotti M."/>
            <person name="De Benedictis L."/>
            <person name="Maier J.A.M."/>
        </authorList>
    </citation>
    <scope>MUTAGENESIS OF THR-65; THR-74 AND SER-87</scope>
    <scope>INTERACTION WITH TBP AND CALM</scope>
    <scope>PHOSPHORYLATION</scope>
    <scope>SUBCELLULAR LOCATION</scope>
    <scope>FUNCTION</scope>
</reference>
<reference key="11">
    <citation type="journal article" date="2009" name="Anal. Chem.">
        <title>Lys-N and trypsin cover complementary parts of the phosphoproteome in a refined SCX-based approach.</title>
        <authorList>
            <person name="Gauci S."/>
            <person name="Helbig A.O."/>
            <person name="Slijper M."/>
            <person name="Krijgsveld J."/>
            <person name="Heck A.J."/>
            <person name="Mohammed S."/>
        </authorList>
    </citation>
    <scope>ACETYLATION [LARGE SCALE ANALYSIS] AT ALA-2</scope>
    <scope>CLEAVAGE OF INITIATOR METHIONINE [LARGE SCALE ANALYSIS]</scope>
    <scope>IDENTIFICATION BY MASS SPECTROMETRY [LARGE SCALE ANALYSIS]</scope>
</reference>
<reference key="12">
    <citation type="journal article" date="2011" name="BMC Syst. Biol.">
        <title>Initial characterization of the human central proteome.</title>
        <authorList>
            <person name="Burkard T.R."/>
            <person name="Planyavsky M."/>
            <person name="Kaupe I."/>
            <person name="Breitwieser F.P."/>
            <person name="Buerckstuemmer T."/>
            <person name="Bennett K.L."/>
            <person name="Superti-Furga G."/>
            <person name="Colinge J."/>
        </authorList>
    </citation>
    <scope>IDENTIFICATION BY MASS SPECTROMETRY [LARGE SCALE ANALYSIS]</scope>
</reference>
<reference key="13">
    <citation type="journal article" date="2012" name="Mol. Cell. Proteomics">
        <title>Comparative large-scale characterisation of plant vs. mammal proteins reveals similar and idiosyncratic N-alpha acetylation features.</title>
        <authorList>
            <person name="Bienvenut W.V."/>
            <person name="Sumpton D."/>
            <person name="Martinez A."/>
            <person name="Lilla S."/>
            <person name="Espagne C."/>
            <person name="Meinnel T."/>
            <person name="Giglione C."/>
        </authorList>
    </citation>
    <scope>ACETYLATION [LARGE SCALE ANALYSIS] AT ALA-2</scope>
    <scope>CLEAVAGE OF INITIATOR METHIONINE [LARGE SCALE ANALYSIS]</scope>
    <scope>IDENTIFICATION BY MASS SPECTROMETRY [LARGE SCALE ANALYSIS]</scope>
</reference>
<reference key="14">
    <citation type="journal article" date="2013" name="J. Proteome Res.">
        <title>Toward a comprehensive characterization of a human cancer cell phosphoproteome.</title>
        <authorList>
            <person name="Zhou H."/>
            <person name="Di Palma S."/>
            <person name="Preisinger C."/>
            <person name="Peng M."/>
            <person name="Polat A.N."/>
            <person name="Heck A.J."/>
            <person name="Mohammed S."/>
        </authorList>
    </citation>
    <scope>PHOSPHORYLATION [LARGE SCALE ANALYSIS] AT SER-4</scope>
    <scope>IDENTIFICATION BY MASS SPECTROMETRY [LARGE SCALE ANALYSIS]</scope>
    <source>
        <tissue>Cervix carcinoma</tissue>
        <tissue>Erythroleukemia</tissue>
    </source>
</reference>
<reference key="15">
    <citation type="journal article" date="2014" name="J. Proteomics">
        <title>An enzyme assisted RP-RPLC approach for in-depth analysis of human liver phosphoproteome.</title>
        <authorList>
            <person name="Bian Y."/>
            <person name="Song C."/>
            <person name="Cheng K."/>
            <person name="Dong M."/>
            <person name="Wang F."/>
            <person name="Huang J."/>
            <person name="Sun D."/>
            <person name="Wang L."/>
            <person name="Ye M."/>
            <person name="Zou H."/>
        </authorList>
    </citation>
    <scope>IDENTIFICATION BY MASS SPECTROMETRY [LARGE SCALE ANALYSIS]</scope>
    <source>
        <tissue>Liver</tissue>
    </source>
</reference>
<reference key="16">
    <citation type="journal article" date="2014" name="Mol. Cell. Proteomics">
        <title>Immunoaffinity enrichment and mass spectrometry analysis of protein methylation.</title>
        <authorList>
            <person name="Guo A."/>
            <person name="Gu H."/>
            <person name="Zhou J."/>
            <person name="Mulhern D."/>
            <person name="Wang Y."/>
            <person name="Lee K.A."/>
            <person name="Yang V."/>
            <person name="Aguiar M."/>
            <person name="Kornhauser J."/>
            <person name="Jia X."/>
            <person name="Ren J."/>
            <person name="Beausoleil S.A."/>
            <person name="Silva J.C."/>
            <person name="Vemulapalli V."/>
            <person name="Bedford M.T."/>
            <person name="Comb M.J."/>
        </authorList>
    </citation>
    <scope>METHYLATION [LARGE SCALE ANALYSIS] AT LYS-25</scope>
    <scope>IDENTIFICATION BY MASS SPECTROMETRY [LARGE SCALE ANALYSIS]</scope>
    <source>
        <tissue>Colon carcinoma</tissue>
    </source>
</reference>
<reference key="17">
    <citation type="journal article" date="2015" name="Proteomics">
        <title>N-terminome analysis of the human mitochondrial proteome.</title>
        <authorList>
            <person name="Vaca Jacome A.S."/>
            <person name="Rabilloud T."/>
            <person name="Schaeffer-Reiss C."/>
            <person name="Rompais M."/>
            <person name="Ayoub D."/>
            <person name="Lane L."/>
            <person name="Bairoch A."/>
            <person name="Van Dorsselaer A."/>
            <person name="Carapito C."/>
        </authorList>
    </citation>
    <scope>ACETYLATION [LARGE SCALE ANALYSIS] AT ALA-2</scope>
    <scope>CLEAVAGE OF INITIATOR METHIONINE [LARGE SCALE ANALYSIS]</scope>
    <scope>IDENTIFICATION BY MASS SPECTROMETRY [LARGE SCALE ANALYSIS]</scope>
</reference>
<reference key="18">
    <citation type="submission" date="2005-11" db="PDB data bank">
        <title>Solution structures of the HTH domain of human EDF-1 protein.</title>
        <authorList>
            <consortium name="RIKEN structural genomics initiative (RSGI)"/>
        </authorList>
    </citation>
    <scope>STRUCTURE BY NMR OF 71-148</scope>
</reference>
<feature type="initiator methionine" description="Removed" evidence="9 12 13 16">
    <location>
        <position position="1"/>
    </location>
</feature>
<feature type="chain" id="PRO_0000149795" description="Endothelial differentiation-related factor 1">
    <location>
        <begin position="2"/>
        <end position="148"/>
    </location>
</feature>
<feature type="domain" description="HTH cro/C1-type" evidence="2">
    <location>
        <begin position="81"/>
        <end position="135"/>
    </location>
</feature>
<feature type="DNA-binding region" description="H-T-H motif" evidence="2">
    <location>
        <begin position="92"/>
        <end position="111"/>
    </location>
</feature>
<feature type="region of interest" description="Disordered" evidence="3">
    <location>
        <begin position="33"/>
        <end position="66"/>
    </location>
</feature>
<feature type="region of interest" description="Interaction with NR5A2, PPARG and NR1H3" evidence="6">
    <location>
        <begin position="37"/>
        <end position="113"/>
    </location>
</feature>
<feature type="region of interest" description="Interaction with TBP and NR5A1" evidence="4">
    <location>
        <begin position="69"/>
        <end position="108"/>
    </location>
</feature>
<feature type="short sequence motif" description="IQ motif">
    <location>
        <begin position="81"/>
        <end position="88"/>
    </location>
</feature>
<feature type="compositionally biased region" description="Basic and acidic residues" evidence="3">
    <location>
        <begin position="33"/>
        <end position="42"/>
    </location>
</feature>
<feature type="compositionally biased region" description="Polar residues" evidence="3">
    <location>
        <begin position="48"/>
        <end position="58"/>
    </location>
</feature>
<feature type="modified residue" description="N-acetylalanine" evidence="9 12 13 16">
    <location>
        <position position="2"/>
    </location>
</feature>
<feature type="modified residue" description="Phosphoserine" evidence="14">
    <location>
        <position position="4"/>
    </location>
</feature>
<feature type="modified residue" description="N6-methyllysine" evidence="15">
    <location>
        <position position="25"/>
    </location>
</feature>
<feature type="splice variant" id="VSP_054701" description="In isoform 3." evidence="11">
    <original>GLKLRGKDIGKPIEKGPRAK</original>
    <variation>DVGTRSARVLRAQ</variation>
    <location>
        <begin position="129"/>
        <end position="148"/>
    </location>
</feature>
<feature type="splice variant" id="VSP_013336" description="In isoform 2." evidence="10">
    <original>LKLRGKDIGKPIEKGPRAK</original>
    <variation>ECPSTLRRVR</variation>
    <location>
        <begin position="130"/>
        <end position="148"/>
    </location>
</feature>
<feature type="mutagenesis site" description="Loss of interaction with CALM; when associated with D-58; D-91 and D-111." evidence="5">
    <original>T</original>
    <variation>D</variation>
    <location>
        <position position="40"/>
    </location>
</feature>
<feature type="mutagenesis site" description="Loss of interaction with CALM; when associated with D-40; D-91 and D-111." evidence="5">
    <original>T</original>
    <variation>D</variation>
    <location>
        <position position="58"/>
    </location>
</feature>
<feature type="mutagenesis site" description="No effect on CALM-binding. No effect; when associated with D-74." evidence="7">
    <original>T</original>
    <variation>D</variation>
    <location>
        <position position="65"/>
    </location>
</feature>
<feature type="mutagenesis site" description="No effect on CALM-binding. No effect; when associated with D-65." evidence="7">
    <original>T</original>
    <variation>D</variation>
    <location>
        <position position="74"/>
    </location>
</feature>
<feature type="mutagenesis site" description="No effect on CALM-binding." evidence="7">
    <original>S</original>
    <variation>A</variation>
    <location>
        <position position="87"/>
    </location>
</feature>
<feature type="mutagenesis site" description="Loss of interaction with CALM and higher affinity for TBP. Same effect; when associated with D-65 and D-74." evidence="7">
    <original>S</original>
    <variation>D</variation>
    <location>
        <position position="87"/>
    </location>
</feature>
<feature type="mutagenesis site" description="No effect on CALM-binding." evidence="5">
    <original>T</original>
    <variation>A</variation>
    <location>
        <position position="91"/>
    </location>
</feature>
<feature type="mutagenesis site" description="Partial loss of interaction with CALM. Complete loss of interaction; when associated with D-40; D-58 and D-111." evidence="5">
    <original>T</original>
    <variation>D</variation>
    <location>
        <position position="91"/>
    </location>
</feature>
<feature type="mutagenesis site" description="Loss of interaction with CALM; when associated with D-40; D-58 and D-91." evidence="5">
    <original>S</original>
    <variation>D</variation>
    <location>
        <position position="111"/>
    </location>
</feature>
<feature type="helix" evidence="18">
    <location>
        <begin position="25"/>
        <end position="32"/>
    </location>
</feature>
<feature type="helix" evidence="18">
    <location>
        <begin position="58"/>
        <end position="63"/>
    </location>
</feature>
<feature type="helix" evidence="18">
    <location>
        <begin position="75"/>
        <end position="86"/>
    </location>
</feature>
<feature type="turn" evidence="18">
    <location>
        <begin position="87"/>
        <end position="89"/>
    </location>
</feature>
<feature type="helix" evidence="18">
    <location>
        <begin position="92"/>
        <end position="98"/>
    </location>
</feature>
<feature type="helix" evidence="18">
    <location>
        <begin position="103"/>
        <end position="110"/>
    </location>
</feature>
<feature type="helix" evidence="18">
    <location>
        <begin position="118"/>
        <end position="128"/>
    </location>
</feature>
<feature type="turn" evidence="17">
    <location>
        <begin position="135"/>
        <end position="138"/>
    </location>
</feature>
<feature type="strand" evidence="17">
    <location>
        <begin position="140"/>
        <end position="143"/>
    </location>
</feature>
<dbReference type="EMBL" id="AJ005259">
    <property type="protein sequence ID" value="CAA06446.1"/>
    <property type="molecule type" value="mRNA"/>
</dbReference>
<dbReference type="EMBL" id="AB002282">
    <property type="protein sequence ID" value="BAA88073.1"/>
    <property type="molecule type" value="mRNA"/>
</dbReference>
<dbReference type="EMBL" id="AB002283">
    <property type="protein sequence ID" value="BAA88074.1"/>
    <property type="molecule type" value="mRNA"/>
</dbReference>
<dbReference type="EMBL" id="CR541914">
    <property type="protein sequence ID" value="CAG46712.1"/>
    <property type="molecule type" value="mRNA"/>
</dbReference>
<dbReference type="EMBL" id="BT009863">
    <property type="protein sequence ID" value="AAP88865.1"/>
    <property type="molecule type" value="mRNA"/>
</dbReference>
<dbReference type="EMBL" id="AL355987">
    <property type="status" value="NOT_ANNOTATED_CDS"/>
    <property type="molecule type" value="Genomic_DNA"/>
</dbReference>
<dbReference type="EMBL" id="BC015500">
    <property type="protein sequence ID" value="AAH15500.1"/>
    <property type="molecule type" value="mRNA"/>
</dbReference>
<dbReference type="CCDS" id="CCDS65193.1">
    <molecule id="O60869-3"/>
</dbReference>
<dbReference type="CCDS" id="CCDS7011.1">
    <molecule id="O60869-1"/>
</dbReference>
<dbReference type="CCDS" id="CCDS7012.1">
    <molecule id="O60869-2"/>
</dbReference>
<dbReference type="RefSeq" id="NP_001268226.1">
    <molecule id="O60869-3"/>
    <property type="nucleotide sequence ID" value="NM_001281297.2"/>
</dbReference>
<dbReference type="RefSeq" id="NP_001268227.1">
    <property type="nucleotide sequence ID" value="NM_001281298.1"/>
</dbReference>
<dbReference type="RefSeq" id="NP_001268228.1">
    <property type="nucleotide sequence ID" value="NM_001281299.1"/>
</dbReference>
<dbReference type="RefSeq" id="NP_003783.1">
    <molecule id="O60869-1"/>
    <property type="nucleotide sequence ID" value="NM_003792.4"/>
</dbReference>
<dbReference type="RefSeq" id="NP_694880.1">
    <molecule id="O60869-2"/>
    <property type="nucleotide sequence ID" value="NM_153200.3"/>
</dbReference>
<dbReference type="PDB" id="1X57">
    <property type="method" value="NMR"/>
    <property type="chains" value="A=71-148"/>
</dbReference>
<dbReference type="PDB" id="6ZVH">
    <property type="method" value="EM"/>
    <property type="resolution" value="2.90 A"/>
    <property type="chains" value="i=24-133"/>
</dbReference>
<dbReference type="PDBsum" id="1X57"/>
<dbReference type="PDBsum" id="6ZVH"/>
<dbReference type="BMRB" id="O60869"/>
<dbReference type="EMDB" id="EMD-11456"/>
<dbReference type="SMR" id="O60869"/>
<dbReference type="BioGRID" id="114260">
    <property type="interactions" value="92"/>
</dbReference>
<dbReference type="FunCoup" id="O60869">
    <property type="interactions" value="2885"/>
</dbReference>
<dbReference type="IntAct" id="O60869">
    <property type="interactions" value="50"/>
</dbReference>
<dbReference type="MINT" id="O60869"/>
<dbReference type="STRING" id="9606.ENSP00000224073"/>
<dbReference type="ChEMBL" id="CHEMBL4295670"/>
<dbReference type="GlyGen" id="O60869">
    <property type="glycosylation" value="2 sites, 1 O-linked glycan (1 site)"/>
</dbReference>
<dbReference type="iPTMnet" id="O60869"/>
<dbReference type="PhosphoSitePlus" id="O60869"/>
<dbReference type="BioMuta" id="EDF1"/>
<dbReference type="jPOST" id="O60869"/>
<dbReference type="MassIVE" id="O60869"/>
<dbReference type="PaxDb" id="9606-ENSP00000224073"/>
<dbReference type="PeptideAtlas" id="O60869"/>
<dbReference type="ProteomicsDB" id="49636">
    <molecule id="O60869-1"/>
</dbReference>
<dbReference type="ProteomicsDB" id="49637">
    <molecule id="O60869-2"/>
</dbReference>
<dbReference type="Pumba" id="O60869"/>
<dbReference type="TopDownProteomics" id="O60869-1">
    <molecule id="O60869-1"/>
</dbReference>
<dbReference type="Antibodypedia" id="18815">
    <property type="antibodies" value="222 antibodies from 32 providers"/>
</dbReference>
<dbReference type="DNASU" id="8721"/>
<dbReference type="Ensembl" id="ENST00000224073.6">
    <molecule id="O60869-1"/>
    <property type="protein sequence ID" value="ENSP00000224073.1"/>
    <property type="gene ID" value="ENSG00000107223.13"/>
</dbReference>
<dbReference type="Ensembl" id="ENST00000371648.4">
    <molecule id="O60869-2"/>
    <property type="protein sequence ID" value="ENSP00000360711.4"/>
    <property type="gene ID" value="ENSG00000107223.13"/>
</dbReference>
<dbReference type="Ensembl" id="ENST00000371649.5">
    <molecule id="O60869-3"/>
    <property type="protein sequence ID" value="ENSP00000360712.1"/>
    <property type="gene ID" value="ENSG00000107223.13"/>
</dbReference>
<dbReference type="GeneID" id="8721"/>
<dbReference type="KEGG" id="hsa:8721"/>
<dbReference type="MANE-Select" id="ENST00000224073.6">
    <property type="protein sequence ID" value="ENSP00000224073.1"/>
    <property type="RefSeq nucleotide sequence ID" value="NM_003792.4"/>
    <property type="RefSeq protein sequence ID" value="NP_003783.1"/>
</dbReference>
<dbReference type="UCSC" id="uc004cjt.3">
    <molecule id="O60869-1"/>
    <property type="organism name" value="human"/>
</dbReference>
<dbReference type="AGR" id="HGNC:3164"/>
<dbReference type="CTD" id="8721"/>
<dbReference type="DisGeNET" id="8721"/>
<dbReference type="GeneCards" id="EDF1"/>
<dbReference type="HGNC" id="HGNC:3164">
    <property type="gene designation" value="EDF1"/>
</dbReference>
<dbReference type="HPA" id="ENSG00000107223">
    <property type="expression patterns" value="Low tissue specificity"/>
</dbReference>
<dbReference type="MIM" id="605107">
    <property type="type" value="gene"/>
</dbReference>
<dbReference type="neXtProt" id="NX_O60869"/>
<dbReference type="OpenTargets" id="ENSG00000107223"/>
<dbReference type="PharmGKB" id="PA27604"/>
<dbReference type="VEuPathDB" id="HostDB:ENSG00000107223"/>
<dbReference type="eggNOG" id="KOG3398">
    <property type="taxonomic scope" value="Eukaryota"/>
</dbReference>
<dbReference type="GeneTree" id="ENSGT00390000008519"/>
<dbReference type="HOGENOM" id="CLU_112609_0_1_1"/>
<dbReference type="InParanoid" id="O60869"/>
<dbReference type="OMA" id="GKNKSCK"/>
<dbReference type="OrthoDB" id="10253401at2759"/>
<dbReference type="PAN-GO" id="O60869">
    <property type="GO annotations" value="1 GO annotation based on evolutionary models"/>
</dbReference>
<dbReference type="PhylomeDB" id="O60869"/>
<dbReference type="TreeFam" id="TF300064"/>
<dbReference type="PathwayCommons" id="O60869"/>
<dbReference type="SignaLink" id="O60869"/>
<dbReference type="SIGNOR" id="O60869"/>
<dbReference type="BioGRID-ORCS" id="8721">
    <property type="hits" value="89 hits in 1183 CRISPR screens"/>
</dbReference>
<dbReference type="CD-CODE" id="91857CE7">
    <property type="entry name" value="Nucleolus"/>
</dbReference>
<dbReference type="ChiTaRS" id="EDF1">
    <property type="organism name" value="human"/>
</dbReference>
<dbReference type="EvolutionaryTrace" id="O60869"/>
<dbReference type="GeneWiki" id="EDF1"/>
<dbReference type="GenomeRNAi" id="8721"/>
<dbReference type="Pharos" id="O60869">
    <property type="development level" value="Tbio"/>
</dbReference>
<dbReference type="PRO" id="PR:O60869"/>
<dbReference type="Proteomes" id="UP000005640">
    <property type="component" value="Chromosome 9"/>
</dbReference>
<dbReference type="RNAct" id="O60869">
    <property type="molecule type" value="protein"/>
</dbReference>
<dbReference type="Bgee" id="ENSG00000107223">
    <property type="expression patterns" value="Expressed in parotid gland and 204 other cell types or tissues"/>
</dbReference>
<dbReference type="GO" id="GO:0005737">
    <property type="term" value="C:cytoplasm"/>
    <property type="evidence" value="ECO:0000314"/>
    <property type="project" value="UniProtKB"/>
</dbReference>
<dbReference type="GO" id="GO:0005829">
    <property type="term" value="C:cytosol"/>
    <property type="evidence" value="ECO:0000314"/>
    <property type="project" value="HPA"/>
</dbReference>
<dbReference type="GO" id="GO:0005730">
    <property type="term" value="C:nucleolus"/>
    <property type="evidence" value="ECO:0000314"/>
    <property type="project" value="HPA"/>
</dbReference>
<dbReference type="GO" id="GO:0005654">
    <property type="term" value="C:nucleoplasm"/>
    <property type="evidence" value="ECO:0000314"/>
    <property type="project" value="HPA"/>
</dbReference>
<dbReference type="GO" id="GO:0005634">
    <property type="term" value="C:nucleus"/>
    <property type="evidence" value="ECO:0000314"/>
    <property type="project" value="UniProtKB"/>
</dbReference>
<dbReference type="GO" id="GO:0005516">
    <property type="term" value="F:calmodulin binding"/>
    <property type="evidence" value="ECO:0007669"/>
    <property type="project" value="UniProtKB-KW"/>
</dbReference>
<dbReference type="GO" id="GO:0003677">
    <property type="term" value="F:DNA binding"/>
    <property type="evidence" value="ECO:0007669"/>
    <property type="project" value="UniProtKB-KW"/>
</dbReference>
<dbReference type="GO" id="GO:0003723">
    <property type="term" value="F:RNA binding"/>
    <property type="evidence" value="ECO:0007005"/>
    <property type="project" value="UniProtKB"/>
</dbReference>
<dbReference type="GO" id="GO:0001094">
    <property type="term" value="F:TFIID-class transcription factor complex binding"/>
    <property type="evidence" value="ECO:0000314"/>
    <property type="project" value="UniProtKB"/>
</dbReference>
<dbReference type="GO" id="GO:0003713">
    <property type="term" value="F:transcription coactivator activity"/>
    <property type="evidence" value="ECO:0000315"/>
    <property type="project" value="UniProtKB"/>
</dbReference>
<dbReference type="GO" id="GO:0045446">
    <property type="term" value="P:endothelial cell differentiation"/>
    <property type="evidence" value="ECO:0000304"/>
    <property type="project" value="UniProtKB"/>
</dbReference>
<dbReference type="GO" id="GO:0043388">
    <property type="term" value="P:positive regulation of DNA binding"/>
    <property type="evidence" value="ECO:0000314"/>
    <property type="project" value="UniProtKB"/>
</dbReference>
<dbReference type="GO" id="GO:0045893">
    <property type="term" value="P:positive regulation of DNA-templated transcription"/>
    <property type="evidence" value="ECO:0000304"/>
    <property type="project" value="UniProtKB"/>
</dbReference>
<dbReference type="GO" id="GO:0006355">
    <property type="term" value="P:regulation of DNA-templated transcription"/>
    <property type="evidence" value="ECO:0000304"/>
    <property type="project" value="UniProtKB"/>
</dbReference>
<dbReference type="GO" id="GO:0019216">
    <property type="term" value="P:regulation of lipid metabolic process"/>
    <property type="evidence" value="ECO:0000304"/>
    <property type="project" value="UniProtKB"/>
</dbReference>
<dbReference type="CDD" id="cd00093">
    <property type="entry name" value="HTH_XRE"/>
    <property type="match status" value="1"/>
</dbReference>
<dbReference type="FunFam" id="1.10.260.40:FF:000015">
    <property type="entry name" value="Endothelial differentiation-related factor 1"/>
    <property type="match status" value="1"/>
</dbReference>
<dbReference type="Gene3D" id="1.10.260.40">
    <property type="entry name" value="lambda repressor-like DNA-binding domains"/>
    <property type="match status" value="1"/>
</dbReference>
<dbReference type="InterPro" id="IPR001387">
    <property type="entry name" value="Cro/C1-type_HTH"/>
</dbReference>
<dbReference type="InterPro" id="IPR010982">
    <property type="entry name" value="Lambda_DNA-bd_dom_sf"/>
</dbReference>
<dbReference type="InterPro" id="IPR013729">
    <property type="entry name" value="MBF1_N"/>
</dbReference>
<dbReference type="PANTHER" id="PTHR10245:SF15">
    <property type="entry name" value="ENDOTHELIAL DIFFERENTIATION-RELATED FACTOR 1"/>
    <property type="match status" value="1"/>
</dbReference>
<dbReference type="PANTHER" id="PTHR10245">
    <property type="entry name" value="ENDOTHELIAL DIFFERENTIATION-RELATED FACTOR 1 MULTIPROTEIN BRIDGING FACTOR 1"/>
    <property type="match status" value="1"/>
</dbReference>
<dbReference type="Pfam" id="PF01381">
    <property type="entry name" value="HTH_3"/>
    <property type="match status" value="1"/>
</dbReference>
<dbReference type="Pfam" id="PF08523">
    <property type="entry name" value="MBF1"/>
    <property type="match status" value="1"/>
</dbReference>
<dbReference type="SMART" id="SM00530">
    <property type="entry name" value="HTH_XRE"/>
    <property type="match status" value="1"/>
</dbReference>
<dbReference type="SUPFAM" id="SSF47413">
    <property type="entry name" value="lambda repressor-like DNA-binding domains"/>
    <property type="match status" value="1"/>
</dbReference>
<dbReference type="PROSITE" id="PS50943">
    <property type="entry name" value="HTH_CROC1"/>
    <property type="match status" value="1"/>
</dbReference>
<protein>
    <recommendedName>
        <fullName>Endothelial differentiation-related factor 1</fullName>
        <shortName>EDF-1</shortName>
    </recommendedName>
    <alternativeName>
        <fullName>Multiprotein-bridging factor 1</fullName>
        <shortName>MBF1</shortName>
    </alternativeName>
</protein>
<gene>
    <name type="primary">EDF1</name>
</gene>
<accession>O60869</accession>
<accession>Q5T5T2</accession>
<accession>Q9UIM1</accession>
<organism>
    <name type="scientific">Homo sapiens</name>
    <name type="common">Human</name>
    <dbReference type="NCBI Taxonomy" id="9606"/>
    <lineage>
        <taxon>Eukaryota</taxon>
        <taxon>Metazoa</taxon>
        <taxon>Chordata</taxon>
        <taxon>Craniata</taxon>
        <taxon>Vertebrata</taxon>
        <taxon>Euteleostomi</taxon>
        <taxon>Mammalia</taxon>
        <taxon>Eutheria</taxon>
        <taxon>Euarchontoglires</taxon>
        <taxon>Primates</taxon>
        <taxon>Haplorrhini</taxon>
        <taxon>Catarrhini</taxon>
        <taxon>Hominidae</taxon>
        <taxon>Homo</taxon>
    </lineage>
</organism>
<name>EDF1_HUMAN</name>
<proteinExistence type="evidence at protein level"/>
<comment type="function">
    <text evidence="4 6 7 8">Transcriptional coactivator stimulating NR5A1 and ligand-dependent NR1H3/LXRA and PPARG transcriptional activities. Enhances the DNA-binding activity of ATF1, ATF2, CREB1 and NR5A1. Regulates nitric oxid synthase activity probably by sequestering calmodulin in the cytoplasm. May function in endothelial cells differentiation, hormone-induced cardiomyocytes hypertrophy and lipid metabolism.</text>
</comment>
<comment type="subunit">
    <text evidence="4 5 6 7">Interacts with TBP and the transcription factor IID (TFIID) complex, NR5A2, NR1H3 and PPARG. Interaction with TBP is regulated by phosphorylation. Binds NR5A1, ATF1, FOS and JUN via their conserved basic region. Binding to calmodulin is regulated by calcium and phosphorylation of the IQ motif.</text>
</comment>
<comment type="interaction">
    <interactant intactId="EBI-781301">
        <id>O60869</id>
    </interactant>
    <interactant intactId="EBI-349854">
        <id>P13569</id>
        <label>CFTR</label>
    </interactant>
    <organismsDiffer>false</organismsDiffer>
    <experiments>3</experiments>
</comment>
<comment type="interaction">
    <interactant intactId="EBI-781301">
        <id>O60869</id>
    </interactant>
    <interactant intactId="EBI-78473">
        <id>P03372</id>
        <label>ESR1</label>
    </interactant>
    <organismsDiffer>false</organismsDiffer>
    <experiments>3</experiments>
</comment>
<comment type="interaction">
    <interactant intactId="EBI-781301">
        <id>O60869</id>
    </interactant>
    <interactant intactId="EBI-466029">
        <id>P42858</id>
        <label>HTT</label>
    </interactant>
    <organismsDiffer>false</organismsDiffer>
    <experiments>6</experiments>
</comment>
<comment type="interaction">
    <interactant intactId="EBI-781301">
        <id>O60869</id>
    </interactant>
    <interactant intactId="EBI-748397">
        <id>P50222</id>
        <label>MEOX2</label>
    </interactant>
    <organismsDiffer>false</organismsDiffer>
    <experiments>3</experiments>
</comment>
<comment type="interaction">
    <interactant intactId="EBI-781301">
        <id>O60869</id>
    </interactant>
    <interactant intactId="EBI-781356">
        <id>Q13133</id>
        <label>NR1H3</label>
    </interactant>
    <organismsDiffer>false</organismsDiffer>
    <experiments>4</experiments>
</comment>
<comment type="interaction">
    <interactant intactId="EBI-781301">
        <id>O60869</id>
    </interactant>
    <interactant intactId="EBI-781320">
        <id>O00482</id>
        <label>NR5A2</label>
    </interactant>
    <organismsDiffer>false</organismsDiffer>
    <experiments>2</experiments>
</comment>
<comment type="interaction">
    <interactant intactId="EBI-781301">
        <id>O60869</id>
    </interactant>
    <interactant intactId="EBI-781384">
        <id>P37231</id>
        <label>PPARG</label>
    </interactant>
    <organismsDiffer>false</organismsDiffer>
    <experiments>4</experiments>
</comment>
<comment type="interaction">
    <interactant intactId="EBI-781301">
        <id>O60869</id>
    </interactant>
    <interactant intactId="EBI-2548993">
        <id>P03495</id>
        <label>NS</label>
    </interactant>
    <organismsDiffer>true</organismsDiffer>
    <experiments>2</experiments>
</comment>
<comment type="interaction">
    <interactant intactId="EBI-781310">
        <id>O60869-1</id>
    </interactant>
    <interactant intactId="EBI-355371">
        <id>P20226</id>
        <label>TBP</label>
    </interactant>
    <organismsDiffer>false</organismsDiffer>
    <experiments>2</experiments>
</comment>
<comment type="interaction">
    <interactant intactId="EBI-781310">
        <id>O60869-1</id>
    </interactant>
    <interactant intactId="EBI-850837">
        <id>Q04752</id>
        <label>NR5A1</label>
    </interactant>
    <organismsDiffer>true</organismsDiffer>
    <experiments>4</experiments>
</comment>
<comment type="subcellular location">
    <subcellularLocation>
        <location>Cytoplasm</location>
    </subcellularLocation>
    <subcellularLocation>
        <location>Nucleus</location>
    </subcellularLocation>
    <text>Also nuclear upon binding to NR5A1 and treatment of cells with TPA or forskolin.</text>
</comment>
<comment type="alternative products">
    <event type="alternative splicing"/>
    <isoform>
        <id>O60869-1</id>
        <name>1</name>
        <name>Alpha</name>
        <sequence type="displayed"/>
    </isoform>
    <isoform>
        <id>O60869-2</id>
        <name>2</name>
        <name>Beta</name>
        <sequence type="described" ref="VSP_013336"/>
    </isoform>
    <isoform>
        <id>O60869-3</id>
        <name>3</name>
        <sequence type="described" ref="VSP_054701"/>
    </isoform>
</comment>
<comment type="tissue specificity">
    <text evidence="4 6 8">Expressed in brain, liver, lung, kidney and heart (at protein level). Ubiquitously expressed. More abundant in heart, pancreas, liver, intestine and adipose tissues.</text>
</comment>
<comment type="developmental stage">
    <text evidence="8">Expressed in fetal tissues. More abundant in kidney.</text>
</comment>
<comment type="induction">
    <text evidence="8">Down-regulated by HIV-1 Tat or phorbol ester (TPA) treatment in endothelial cells (at mRNA and protein levels).</text>
</comment>
<comment type="domain">
    <text evidence="1">The IQ motif, which is involved in calmodulin binding, overlaps with the binding domain for nuclear receptors and transcription factors. Its phosphorylation probably allows a switch between the two activities of the protein (By similarity).</text>
</comment>
<comment type="PTM">
    <text evidence="5 7">Phosphorylated (by PKA and PKC).</text>
</comment>
<sequence>MAESDWDTVTVLRKKGPTAAQAKSKQAILAAQRRGEDVETSKKWAAGQNKQHSITKNTAKLDRETEELHHDRVTLEVGKVIQQGRQSKGLTQKDLATKINEKPQVIADYESGRAIPNNQVLGKIERAIGLKLRGKDIGKPIEKGPRAK</sequence>
<evidence type="ECO:0000250" key="1"/>
<evidence type="ECO:0000255" key="2">
    <source>
        <dbReference type="PROSITE-ProRule" id="PRU00257"/>
    </source>
</evidence>
<evidence type="ECO:0000256" key="3">
    <source>
        <dbReference type="SAM" id="MobiDB-lite"/>
    </source>
</evidence>
<evidence type="ECO:0000269" key="4">
    <source>
    </source>
</evidence>
<evidence type="ECO:0000269" key="5">
    <source>
    </source>
</evidence>
<evidence type="ECO:0000269" key="6">
    <source>
    </source>
</evidence>
<evidence type="ECO:0000269" key="7">
    <source>
    </source>
</evidence>
<evidence type="ECO:0000269" key="8">
    <source>
    </source>
</evidence>
<evidence type="ECO:0000269" key="9">
    <source ref="7"/>
</evidence>
<evidence type="ECO:0000303" key="10">
    <source>
    </source>
</evidence>
<evidence type="ECO:0000305" key="11"/>
<evidence type="ECO:0007744" key="12">
    <source>
    </source>
</evidence>
<evidence type="ECO:0007744" key="13">
    <source>
    </source>
</evidence>
<evidence type="ECO:0007744" key="14">
    <source>
    </source>
</evidence>
<evidence type="ECO:0007744" key="15">
    <source>
    </source>
</evidence>
<evidence type="ECO:0007744" key="16">
    <source>
    </source>
</evidence>
<evidence type="ECO:0007829" key="17">
    <source>
        <dbReference type="PDB" id="1X57"/>
    </source>
</evidence>
<evidence type="ECO:0007829" key="18">
    <source>
        <dbReference type="PDB" id="6ZVH"/>
    </source>
</evidence>
<keyword id="KW-0002">3D-structure</keyword>
<keyword id="KW-0007">Acetylation</keyword>
<keyword id="KW-0010">Activator</keyword>
<keyword id="KW-0025">Alternative splicing</keyword>
<keyword id="KW-0112">Calmodulin-binding</keyword>
<keyword id="KW-0963">Cytoplasm</keyword>
<keyword id="KW-0217">Developmental protein</keyword>
<keyword id="KW-0221">Differentiation</keyword>
<keyword id="KW-0903">Direct protein sequencing</keyword>
<keyword id="KW-0238">DNA-binding</keyword>
<keyword id="KW-0488">Methylation</keyword>
<keyword id="KW-0539">Nucleus</keyword>
<keyword id="KW-0597">Phosphoprotein</keyword>
<keyword id="KW-1267">Proteomics identification</keyword>
<keyword id="KW-1185">Reference proteome</keyword>
<keyword id="KW-0804">Transcription</keyword>
<keyword id="KW-0805">Transcription regulation</keyword>